<name>PHNX_PSEAB</name>
<accession>Q02JF2</accession>
<dbReference type="EC" id="3.11.1.1" evidence="1"/>
<dbReference type="EMBL" id="CP000438">
    <property type="protein sequence ID" value="ABJ10499.1"/>
    <property type="molecule type" value="Genomic_DNA"/>
</dbReference>
<dbReference type="RefSeq" id="WP_003100114.1">
    <property type="nucleotide sequence ID" value="NZ_CP034244.1"/>
</dbReference>
<dbReference type="SMR" id="Q02JF2"/>
<dbReference type="KEGG" id="pau:PA14_47280"/>
<dbReference type="PseudoCAP" id="PA14_47280"/>
<dbReference type="HOGENOM" id="CLU_045011_12_0_6"/>
<dbReference type="BioCyc" id="PAER208963:G1G74-3973-MONOMER"/>
<dbReference type="Proteomes" id="UP000000653">
    <property type="component" value="Chromosome"/>
</dbReference>
<dbReference type="GO" id="GO:0005829">
    <property type="term" value="C:cytosol"/>
    <property type="evidence" value="ECO:0007669"/>
    <property type="project" value="TreeGrafter"/>
</dbReference>
<dbReference type="GO" id="GO:0000287">
    <property type="term" value="F:magnesium ion binding"/>
    <property type="evidence" value="ECO:0007669"/>
    <property type="project" value="UniProtKB-UniRule"/>
</dbReference>
<dbReference type="GO" id="GO:0008967">
    <property type="term" value="F:phosphoglycolate phosphatase activity"/>
    <property type="evidence" value="ECO:0007669"/>
    <property type="project" value="TreeGrafter"/>
</dbReference>
<dbReference type="GO" id="GO:0050194">
    <property type="term" value="F:phosphonoacetaldehyde hydrolase activity"/>
    <property type="evidence" value="ECO:0007669"/>
    <property type="project" value="UniProtKB-UniRule"/>
</dbReference>
<dbReference type="GO" id="GO:0006281">
    <property type="term" value="P:DNA repair"/>
    <property type="evidence" value="ECO:0007669"/>
    <property type="project" value="TreeGrafter"/>
</dbReference>
<dbReference type="GO" id="GO:0019700">
    <property type="term" value="P:organic phosphonate catabolic process"/>
    <property type="evidence" value="ECO:0007669"/>
    <property type="project" value="InterPro"/>
</dbReference>
<dbReference type="CDD" id="cd02586">
    <property type="entry name" value="HAD_PHN"/>
    <property type="match status" value="1"/>
</dbReference>
<dbReference type="FunFam" id="1.10.150.240:FF:000006">
    <property type="entry name" value="Phosphonoacetaldehyde hydrolase"/>
    <property type="match status" value="1"/>
</dbReference>
<dbReference type="Gene3D" id="3.40.50.1000">
    <property type="entry name" value="HAD superfamily/HAD-like"/>
    <property type="match status" value="1"/>
</dbReference>
<dbReference type="Gene3D" id="1.10.150.240">
    <property type="entry name" value="Putative phosphatase, domain 2"/>
    <property type="match status" value="1"/>
</dbReference>
<dbReference type="HAMAP" id="MF_01375">
    <property type="entry name" value="PhnX"/>
    <property type="match status" value="1"/>
</dbReference>
<dbReference type="InterPro" id="IPR050155">
    <property type="entry name" value="HAD-like_hydrolase_sf"/>
</dbReference>
<dbReference type="InterPro" id="IPR036412">
    <property type="entry name" value="HAD-like_sf"/>
</dbReference>
<dbReference type="InterPro" id="IPR006439">
    <property type="entry name" value="HAD-SF_hydro_IA"/>
</dbReference>
<dbReference type="InterPro" id="IPR023214">
    <property type="entry name" value="HAD_sf"/>
</dbReference>
<dbReference type="InterPro" id="IPR023198">
    <property type="entry name" value="PGP-like_dom2"/>
</dbReference>
<dbReference type="InterPro" id="IPR006323">
    <property type="entry name" value="Phosphonoacetald_hydro"/>
</dbReference>
<dbReference type="NCBIfam" id="TIGR01509">
    <property type="entry name" value="HAD-SF-IA-v3"/>
    <property type="match status" value="1"/>
</dbReference>
<dbReference type="NCBIfam" id="TIGR01422">
    <property type="entry name" value="phosphonatase"/>
    <property type="match status" value="1"/>
</dbReference>
<dbReference type="PANTHER" id="PTHR43434">
    <property type="entry name" value="PHOSPHOGLYCOLATE PHOSPHATASE"/>
    <property type="match status" value="1"/>
</dbReference>
<dbReference type="PANTHER" id="PTHR43434:SF19">
    <property type="entry name" value="PHOSPHONOACETALDEHYDE HYDROLASE"/>
    <property type="match status" value="1"/>
</dbReference>
<dbReference type="Pfam" id="PF00702">
    <property type="entry name" value="Hydrolase"/>
    <property type="match status" value="1"/>
</dbReference>
<dbReference type="SFLD" id="SFLDS00003">
    <property type="entry name" value="Haloacid_Dehalogenase"/>
    <property type="match status" value="1"/>
</dbReference>
<dbReference type="SFLD" id="SFLDF00038">
    <property type="entry name" value="phosphonoacetaldehyde_hydrolas"/>
    <property type="match status" value="1"/>
</dbReference>
<dbReference type="SUPFAM" id="SSF56784">
    <property type="entry name" value="HAD-like"/>
    <property type="match status" value="1"/>
</dbReference>
<feature type="chain" id="PRO_0000284592" description="Phosphonoacetaldehyde hydrolase">
    <location>
        <begin position="1"/>
        <end position="275"/>
    </location>
</feature>
<feature type="active site" description="Nucleophile" evidence="1">
    <location>
        <position position="15"/>
    </location>
</feature>
<feature type="active site" description="Schiff-base intermediate with substrate" evidence="1">
    <location>
        <position position="56"/>
    </location>
</feature>
<feature type="binding site" evidence="1">
    <location>
        <position position="15"/>
    </location>
    <ligand>
        <name>Mg(2+)</name>
        <dbReference type="ChEBI" id="CHEBI:18420"/>
    </ligand>
</feature>
<feature type="binding site" evidence="1">
    <location>
        <position position="17"/>
    </location>
    <ligand>
        <name>Mg(2+)</name>
        <dbReference type="ChEBI" id="CHEBI:18420"/>
    </ligand>
</feature>
<feature type="binding site" evidence="1">
    <location>
        <position position="189"/>
    </location>
    <ligand>
        <name>Mg(2+)</name>
        <dbReference type="ChEBI" id="CHEBI:18420"/>
    </ligand>
</feature>
<gene>
    <name evidence="1" type="primary">phnX</name>
    <name type="ordered locus">PA14_47280</name>
</gene>
<sequence>MNYNQPATLQAAILDWAGTVVDFGSFAPTQIFVEAFAEFGVQVSLEEARGPMGMGKWDHIRTLCDIPAIAERYRAVFGRLPSDDDVTAIYERFMPLQIEKIAEHSALIPGALQAIAELRGMGLKIGSCSGYPAVVMEKVVALAETNGYVADHVVATDEVPNGRPWPAQALANVIALGIDDVAACVKVDDTWPGILEGRRAGMWTVALTCSGNALGLTYEQYKALPAAELERERTRIEQMFEGSRPHYLIETIAELPAVVRDINARLARGEMPQGN</sequence>
<comment type="function">
    <text evidence="1">Involved in phosphonate degradation.</text>
</comment>
<comment type="catalytic activity">
    <reaction evidence="1">
        <text>phosphonoacetaldehyde + H2O = acetaldehyde + phosphate + H(+)</text>
        <dbReference type="Rhea" id="RHEA:18905"/>
        <dbReference type="ChEBI" id="CHEBI:15343"/>
        <dbReference type="ChEBI" id="CHEBI:15377"/>
        <dbReference type="ChEBI" id="CHEBI:15378"/>
        <dbReference type="ChEBI" id="CHEBI:43474"/>
        <dbReference type="ChEBI" id="CHEBI:58383"/>
        <dbReference type="EC" id="3.11.1.1"/>
    </reaction>
</comment>
<comment type="cofactor">
    <cofactor evidence="1">
        <name>Mg(2+)</name>
        <dbReference type="ChEBI" id="CHEBI:18420"/>
    </cofactor>
    <text evidence="1">Binds 1 Mg(2+) ion per subunit.</text>
</comment>
<comment type="subunit">
    <text evidence="1">Homodimer.</text>
</comment>
<comment type="similarity">
    <text evidence="1">Belongs to the HAD-like hydrolase superfamily. PhnX family.</text>
</comment>
<reference key="1">
    <citation type="journal article" date="2006" name="Genome Biol.">
        <title>Genomic analysis reveals that Pseudomonas aeruginosa virulence is combinatorial.</title>
        <authorList>
            <person name="Lee D.G."/>
            <person name="Urbach J.M."/>
            <person name="Wu G."/>
            <person name="Liberati N.T."/>
            <person name="Feinbaum R.L."/>
            <person name="Miyata S."/>
            <person name="Diggins L.T."/>
            <person name="He J."/>
            <person name="Saucier M."/>
            <person name="Deziel E."/>
            <person name="Friedman L."/>
            <person name="Li L."/>
            <person name="Grills G."/>
            <person name="Montgomery K."/>
            <person name="Kucherlapati R."/>
            <person name="Rahme L.G."/>
            <person name="Ausubel F.M."/>
        </authorList>
    </citation>
    <scope>NUCLEOTIDE SEQUENCE [LARGE SCALE GENOMIC DNA]</scope>
    <source>
        <strain>UCBPP-PA14</strain>
    </source>
</reference>
<keyword id="KW-0378">Hydrolase</keyword>
<keyword id="KW-0460">Magnesium</keyword>
<keyword id="KW-0479">Metal-binding</keyword>
<keyword id="KW-0704">Schiff base</keyword>
<organism>
    <name type="scientific">Pseudomonas aeruginosa (strain UCBPP-PA14)</name>
    <dbReference type="NCBI Taxonomy" id="208963"/>
    <lineage>
        <taxon>Bacteria</taxon>
        <taxon>Pseudomonadati</taxon>
        <taxon>Pseudomonadota</taxon>
        <taxon>Gammaproteobacteria</taxon>
        <taxon>Pseudomonadales</taxon>
        <taxon>Pseudomonadaceae</taxon>
        <taxon>Pseudomonas</taxon>
    </lineage>
</organism>
<protein>
    <recommendedName>
        <fullName evidence="1">Phosphonoacetaldehyde hydrolase</fullName>
        <shortName evidence="1">Phosphonatase</shortName>
        <ecNumber evidence="1">3.11.1.1</ecNumber>
    </recommendedName>
    <alternativeName>
        <fullName evidence="1">Phosphonoacetaldehyde phosphonohydrolase</fullName>
    </alternativeName>
</protein>
<evidence type="ECO:0000255" key="1">
    <source>
        <dbReference type="HAMAP-Rule" id="MF_01375"/>
    </source>
</evidence>
<proteinExistence type="inferred from homology"/>